<feature type="chain" id="PRO_1000094340" description="2-C-methyl-D-erythritol 4-phosphate cytidylyltransferase">
    <location>
        <begin position="1"/>
        <end position="235"/>
    </location>
</feature>
<feature type="site" description="Transition state stabilizer" evidence="1">
    <location>
        <position position="20"/>
    </location>
</feature>
<feature type="site" description="Transition state stabilizer" evidence="1">
    <location>
        <position position="27"/>
    </location>
</feature>
<feature type="site" description="Positions MEP for the nucleophilic attack" evidence="1">
    <location>
        <position position="161"/>
    </location>
</feature>
<feature type="site" description="Positions MEP for the nucleophilic attack" evidence="1">
    <location>
        <position position="217"/>
    </location>
</feature>
<sequence length="235" mass="25726">MIKTLPAFWAVIPAAGVGARMAADRPKQYLQLGGQTLLEHSLDCFLGHPTLKGVVVSIAADDPYWPGLRCASDPRIQRASGGRERADSVLNALLLLHAQDAADTDWVLVHDAARPNLARTDLDRLLSELADDPVGGLLAVPARDTLKRADANGRVSATVDRSTIWQAYTPQMFRLGALHRALAECLVSDVVVTDEASAIEWSGQAPRLIEGRSDNIKVTRPEDLEWLRQRWAGRR</sequence>
<accession>B1JB36</accession>
<protein>
    <recommendedName>
        <fullName evidence="1">2-C-methyl-D-erythritol 4-phosphate cytidylyltransferase</fullName>
        <ecNumber evidence="1">2.7.7.60</ecNumber>
    </recommendedName>
    <alternativeName>
        <fullName evidence="1">4-diphosphocytidyl-2C-methyl-D-erythritol synthase</fullName>
    </alternativeName>
    <alternativeName>
        <fullName evidence="1">MEP cytidylyltransferase</fullName>
        <shortName evidence="1">MCT</shortName>
    </alternativeName>
</protein>
<organism>
    <name type="scientific">Pseudomonas putida (strain W619)</name>
    <dbReference type="NCBI Taxonomy" id="390235"/>
    <lineage>
        <taxon>Bacteria</taxon>
        <taxon>Pseudomonadati</taxon>
        <taxon>Pseudomonadota</taxon>
        <taxon>Gammaproteobacteria</taxon>
        <taxon>Pseudomonadales</taxon>
        <taxon>Pseudomonadaceae</taxon>
        <taxon>Pseudomonas</taxon>
    </lineage>
</organism>
<comment type="function">
    <text evidence="1">Catalyzes the formation of 4-diphosphocytidyl-2-C-methyl-D-erythritol from CTP and 2-C-methyl-D-erythritol 4-phosphate (MEP).</text>
</comment>
<comment type="catalytic activity">
    <reaction evidence="1">
        <text>2-C-methyl-D-erythritol 4-phosphate + CTP + H(+) = 4-CDP-2-C-methyl-D-erythritol + diphosphate</text>
        <dbReference type="Rhea" id="RHEA:13429"/>
        <dbReference type="ChEBI" id="CHEBI:15378"/>
        <dbReference type="ChEBI" id="CHEBI:33019"/>
        <dbReference type="ChEBI" id="CHEBI:37563"/>
        <dbReference type="ChEBI" id="CHEBI:57823"/>
        <dbReference type="ChEBI" id="CHEBI:58262"/>
        <dbReference type="EC" id="2.7.7.60"/>
    </reaction>
</comment>
<comment type="pathway">
    <text evidence="1">Isoprenoid biosynthesis; isopentenyl diphosphate biosynthesis via DXP pathway; isopentenyl diphosphate from 1-deoxy-D-xylulose 5-phosphate: step 2/6.</text>
</comment>
<comment type="similarity">
    <text evidence="1">Belongs to the IspD/TarI cytidylyltransferase family. IspD subfamily.</text>
</comment>
<proteinExistence type="inferred from homology"/>
<evidence type="ECO:0000255" key="1">
    <source>
        <dbReference type="HAMAP-Rule" id="MF_00108"/>
    </source>
</evidence>
<gene>
    <name evidence="1" type="primary">ispD</name>
    <name type="ordered locus">PputW619_4061</name>
</gene>
<reference key="1">
    <citation type="submission" date="2008-02" db="EMBL/GenBank/DDBJ databases">
        <title>Complete sequence of Pseudomonas putida W619.</title>
        <authorList>
            <person name="Copeland A."/>
            <person name="Lucas S."/>
            <person name="Lapidus A."/>
            <person name="Barry K."/>
            <person name="Detter J.C."/>
            <person name="Glavina del Rio T."/>
            <person name="Dalin E."/>
            <person name="Tice H."/>
            <person name="Pitluck S."/>
            <person name="Chain P."/>
            <person name="Malfatti S."/>
            <person name="Shin M."/>
            <person name="Vergez L."/>
            <person name="Schmutz J."/>
            <person name="Larimer F."/>
            <person name="Land M."/>
            <person name="Hauser L."/>
            <person name="Kyrpides N."/>
            <person name="Kim E."/>
            <person name="Taghavi S."/>
            <person name="Vangronsveld D."/>
            <person name="van der Lelie D."/>
            <person name="Richardson P."/>
        </authorList>
    </citation>
    <scope>NUCLEOTIDE SEQUENCE [LARGE SCALE GENOMIC DNA]</scope>
    <source>
        <strain>W619</strain>
    </source>
</reference>
<name>ISPD_PSEPW</name>
<keyword id="KW-0414">Isoprene biosynthesis</keyword>
<keyword id="KW-0548">Nucleotidyltransferase</keyword>
<keyword id="KW-0808">Transferase</keyword>
<dbReference type="EC" id="2.7.7.60" evidence="1"/>
<dbReference type="EMBL" id="CP000949">
    <property type="protein sequence ID" value="ACA74541.1"/>
    <property type="molecule type" value="Genomic_DNA"/>
</dbReference>
<dbReference type="SMR" id="B1JB36"/>
<dbReference type="STRING" id="390235.PputW619_4061"/>
<dbReference type="KEGG" id="ppw:PputW619_4061"/>
<dbReference type="eggNOG" id="COG1211">
    <property type="taxonomic scope" value="Bacteria"/>
</dbReference>
<dbReference type="HOGENOM" id="CLU_061281_3_1_6"/>
<dbReference type="OrthoDB" id="9806837at2"/>
<dbReference type="UniPathway" id="UPA00056">
    <property type="reaction ID" value="UER00093"/>
</dbReference>
<dbReference type="GO" id="GO:0050518">
    <property type="term" value="F:2-C-methyl-D-erythritol 4-phosphate cytidylyltransferase activity"/>
    <property type="evidence" value="ECO:0007669"/>
    <property type="project" value="UniProtKB-UniRule"/>
</dbReference>
<dbReference type="GO" id="GO:0019288">
    <property type="term" value="P:isopentenyl diphosphate biosynthetic process, methylerythritol 4-phosphate pathway"/>
    <property type="evidence" value="ECO:0007669"/>
    <property type="project" value="UniProtKB-UniRule"/>
</dbReference>
<dbReference type="CDD" id="cd02516">
    <property type="entry name" value="CDP-ME_synthetase"/>
    <property type="match status" value="1"/>
</dbReference>
<dbReference type="FunFam" id="3.90.550.10:FF:000003">
    <property type="entry name" value="2-C-methyl-D-erythritol 4-phosphate cytidylyltransferase"/>
    <property type="match status" value="1"/>
</dbReference>
<dbReference type="Gene3D" id="3.90.550.10">
    <property type="entry name" value="Spore Coat Polysaccharide Biosynthesis Protein SpsA, Chain A"/>
    <property type="match status" value="1"/>
</dbReference>
<dbReference type="HAMAP" id="MF_00108">
    <property type="entry name" value="IspD"/>
    <property type="match status" value="1"/>
</dbReference>
<dbReference type="InterPro" id="IPR001228">
    <property type="entry name" value="IspD"/>
</dbReference>
<dbReference type="InterPro" id="IPR034683">
    <property type="entry name" value="IspD/TarI"/>
</dbReference>
<dbReference type="InterPro" id="IPR050088">
    <property type="entry name" value="IspD/TarI_cytidylyltransf_bact"/>
</dbReference>
<dbReference type="InterPro" id="IPR018294">
    <property type="entry name" value="ISPD_synthase_CS"/>
</dbReference>
<dbReference type="InterPro" id="IPR029044">
    <property type="entry name" value="Nucleotide-diphossugar_trans"/>
</dbReference>
<dbReference type="NCBIfam" id="TIGR00453">
    <property type="entry name" value="ispD"/>
    <property type="match status" value="1"/>
</dbReference>
<dbReference type="PANTHER" id="PTHR32125">
    <property type="entry name" value="2-C-METHYL-D-ERYTHRITOL 4-PHOSPHATE CYTIDYLYLTRANSFERASE, CHLOROPLASTIC"/>
    <property type="match status" value="1"/>
</dbReference>
<dbReference type="PANTHER" id="PTHR32125:SF4">
    <property type="entry name" value="2-C-METHYL-D-ERYTHRITOL 4-PHOSPHATE CYTIDYLYLTRANSFERASE, CHLOROPLASTIC"/>
    <property type="match status" value="1"/>
</dbReference>
<dbReference type="Pfam" id="PF01128">
    <property type="entry name" value="IspD"/>
    <property type="match status" value="1"/>
</dbReference>
<dbReference type="SUPFAM" id="SSF53448">
    <property type="entry name" value="Nucleotide-diphospho-sugar transferases"/>
    <property type="match status" value="1"/>
</dbReference>
<dbReference type="PROSITE" id="PS01295">
    <property type="entry name" value="ISPD"/>
    <property type="match status" value="1"/>
</dbReference>